<evidence type="ECO:0000255" key="1">
    <source>
        <dbReference type="PROSITE-ProRule" id="PRU00238"/>
    </source>
</evidence>
<evidence type="ECO:0000269" key="2">
    <source>
    </source>
</evidence>
<evidence type="ECO:0000305" key="3"/>
<name>HBA1_GADMO</name>
<dbReference type="SMR" id="P84609"/>
<dbReference type="STRING" id="8049.ENSGMOP00000004430"/>
<dbReference type="iPTMnet" id="P84609"/>
<dbReference type="Proteomes" id="UP000694546">
    <property type="component" value="Unplaced"/>
</dbReference>
<dbReference type="GO" id="GO:0072562">
    <property type="term" value="C:blood microparticle"/>
    <property type="evidence" value="ECO:0007669"/>
    <property type="project" value="TreeGrafter"/>
</dbReference>
<dbReference type="GO" id="GO:0031838">
    <property type="term" value="C:haptoglobin-hemoglobin complex"/>
    <property type="evidence" value="ECO:0007669"/>
    <property type="project" value="TreeGrafter"/>
</dbReference>
<dbReference type="GO" id="GO:0005833">
    <property type="term" value="C:hemoglobin complex"/>
    <property type="evidence" value="ECO:0007669"/>
    <property type="project" value="InterPro"/>
</dbReference>
<dbReference type="GO" id="GO:0031720">
    <property type="term" value="F:haptoglobin binding"/>
    <property type="evidence" value="ECO:0007669"/>
    <property type="project" value="TreeGrafter"/>
</dbReference>
<dbReference type="GO" id="GO:0020037">
    <property type="term" value="F:heme binding"/>
    <property type="evidence" value="ECO:0007669"/>
    <property type="project" value="InterPro"/>
</dbReference>
<dbReference type="GO" id="GO:0046872">
    <property type="term" value="F:metal ion binding"/>
    <property type="evidence" value="ECO:0007669"/>
    <property type="project" value="UniProtKB-KW"/>
</dbReference>
<dbReference type="GO" id="GO:0043177">
    <property type="term" value="F:organic acid binding"/>
    <property type="evidence" value="ECO:0007669"/>
    <property type="project" value="TreeGrafter"/>
</dbReference>
<dbReference type="GO" id="GO:0019825">
    <property type="term" value="F:oxygen binding"/>
    <property type="evidence" value="ECO:0007669"/>
    <property type="project" value="InterPro"/>
</dbReference>
<dbReference type="GO" id="GO:0005344">
    <property type="term" value="F:oxygen carrier activity"/>
    <property type="evidence" value="ECO:0007669"/>
    <property type="project" value="UniProtKB-KW"/>
</dbReference>
<dbReference type="GO" id="GO:0004601">
    <property type="term" value="F:peroxidase activity"/>
    <property type="evidence" value="ECO:0007669"/>
    <property type="project" value="TreeGrafter"/>
</dbReference>
<dbReference type="GO" id="GO:0042744">
    <property type="term" value="P:hydrogen peroxide catabolic process"/>
    <property type="evidence" value="ECO:0007669"/>
    <property type="project" value="TreeGrafter"/>
</dbReference>
<dbReference type="CDD" id="cd08927">
    <property type="entry name" value="Hb-alpha-like"/>
    <property type="match status" value="1"/>
</dbReference>
<dbReference type="FunFam" id="1.10.490.10:FF:000002">
    <property type="entry name" value="Hemoglobin subunit alpha"/>
    <property type="match status" value="1"/>
</dbReference>
<dbReference type="Gene3D" id="1.10.490.10">
    <property type="entry name" value="Globins"/>
    <property type="match status" value="1"/>
</dbReference>
<dbReference type="InterPro" id="IPR000971">
    <property type="entry name" value="Globin"/>
</dbReference>
<dbReference type="InterPro" id="IPR009050">
    <property type="entry name" value="Globin-like_sf"/>
</dbReference>
<dbReference type="InterPro" id="IPR012292">
    <property type="entry name" value="Globin/Proto"/>
</dbReference>
<dbReference type="InterPro" id="IPR002338">
    <property type="entry name" value="Hemoglobin_a-typ"/>
</dbReference>
<dbReference type="InterPro" id="IPR050056">
    <property type="entry name" value="Hemoglobin_oxygen_transport"/>
</dbReference>
<dbReference type="PANTHER" id="PTHR11442">
    <property type="entry name" value="HEMOGLOBIN FAMILY MEMBER"/>
    <property type="match status" value="1"/>
</dbReference>
<dbReference type="PANTHER" id="PTHR11442:SF41">
    <property type="entry name" value="HEMOGLOBIN SUBUNIT ZETA"/>
    <property type="match status" value="1"/>
</dbReference>
<dbReference type="Pfam" id="PF00042">
    <property type="entry name" value="Globin"/>
    <property type="match status" value="1"/>
</dbReference>
<dbReference type="PRINTS" id="PR00612">
    <property type="entry name" value="ALPHAHAEM"/>
</dbReference>
<dbReference type="SUPFAM" id="SSF46458">
    <property type="entry name" value="Globin-like"/>
    <property type="match status" value="1"/>
</dbReference>
<dbReference type="PROSITE" id="PS01033">
    <property type="entry name" value="GLOBIN"/>
    <property type="match status" value="1"/>
</dbReference>
<feature type="initiator methionine" description="Removed" evidence="2">
    <location>
        <position position="1"/>
    </location>
</feature>
<feature type="chain" id="PRO_0000247579" description="Hemoglobin subunit alpha-1">
    <location>
        <begin position="2"/>
        <end position="143"/>
    </location>
</feature>
<feature type="domain" description="Globin" evidence="1">
    <location>
        <begin position="2"/>
        <end position="143"/>
    </location>
</feature>
<feature type="binding site" evidence="1">
    <location>
        <position position="60"/>
    </location>
    <ligand>
        <name>O2</name>
        <dbReference type="ChEBI" id="CHEBI:15379"/>
    </ligand>
</feature>
<feature type="binding site" description="proximal binding residue" evidence="1">
    <location>
        <position position="89"/>
    </location>
    <ligand>
        <name>heme b</name>
        <dbReference type="ChEBI" id="CHEBI:60344"/>
    </ligand>
    <ligandPart>
        <name>Fe</name>
        <dbReference type="ChEBI" id="CHEBI:18248"/>
    </ligandPart>
</feature>
<feature type="modified residue" description="N-acetylserine" evidence="2">
    <location>
        <position position="2"/>
    </location>
</feature>
<reference evidence="3" key="1">
    <citation type="journal article" date="2006" name="J. Biol. Chem.">
        <title>The oxygen transport system in three species of the boreal fish family Gadidae. Molecular phylogeny of hemoglobin.</title>
        <authorList>
            <person name="Verde C."/>
            <person name="Balestrieri M."/>
            <person name="de Pascale D."/>
            <person name="Pagnozzi D."/>
            <person name="Lecointre G."/>
            <person name="di Prisco G."/>
        </authorList>
    </citation>
    <scope>PROTEIN SEQUENCE OF 2-143</scope>
    <scope>FUNCTION</scope>
    <scope>SUBUNIT</scope>
    <scope>ACETYLATION AT SER-2</scope>
    <source>
        <tissue evidence="2">Blood</tissue>
    </source>
</reference>
<proteinExistence type="evidence at protein level"/>
<protein>
    <recommendedName>
        <fullName>Hemoglobin subunit alpha-1</fullName>
    </recommendedName>
    <alternativeName>
        <fullName>Alpha-1-globin</fullName>
    </alternativeName>
    <alternativeName>
        <fullName>Hemoglobin alpha-1 chain</fullName>
    </alternativeName>
</protein>
<gene>
    <name type="primary">hba1</name>
</gene>
<comment type="function">
    <text evidence="2 3">Involved in oxygen transport from gills to the various peripheral tissues.</text>
</comment>
<comment type="subunit">
    <text evidence="2">Hb 1 is a heterotetramer of two alpha-1 and two beta-1 chains. Hb 3 is a heterotetramer of two alpha-1 and two beta-2 chains.</text>
</comment>
<comment type="tissue specificity">
    <text evidence="3">Red blood cells.</text>
</comment>
<comment type="miscellaneous">
    <text>Hb 3 displays a Bohr effect, which is enhanced by organophosphates, and a Root effect, which is enhanced by ATP.</text>
</comment>
<comment type="similarity">
    <text evidence="1">Belongs to the globin family.</text>
</comment>
<keyword id="KW-0007">Acetylation</keyword>
<keyword id="KW-0903">Direct protein sequencing</keyword>
<keyword id="KW-0349">Heme</keyword>
<keyword id="KW-0408">Iron</keyword>
<keyword id="KW-0479">Metal-binding</keyword>
<keyword id="KW-0561">Oxygen transport</keyword>
<keyword id="KW-1185">Reference proteome</keyword>
<keyword id="KW-0813">Transport</keyword>
<sequence length="143" mass="15907">MSLSSKDKATVKLFWGRMSGKAELIGADALSRMLAVYPQTKTYFSHWKSLSPGSPDVKKHGKTIMMGIGDAVTKMDDLERGLLTLSELHAFKLRVDPTNFKLLSLNILVVMAIMFPDDFTPMAHLAVDKLFCGRALALAEKYR</sequence>
<accession>P84609</accession>
<organism>
    <name type="scientific">Gadus morhua</name>
    <name type="common">Atlantic cod</name>
    <dbReference type="NCBI Taxonomy" id="8049"/>
    <lineage>
        <taxon>Eukaryota</taxon>
        <taxon>Metazoa</taxon>
        <taxon>Chordata</taxon>
        <taxon>Craniata</taxon>
        <taxon>Vertebrata</taxon>
        <taxon>Euteleostomi</taxon>
        <taxon>Actinopterygii</taxon>
        <taxon>Neopterygii</taxon>
        <taxon>Teleostei</taxon>
        <taxon>Neoteleostei</taxon>
        <taxon>Acanthomorphata</taxon>
        <taxon>Zeiogadaria</taxon>
        <taxon>Gadariae</taxon>
        <taxon>Gadiformes</taxon>
        <taxon>Gadoidei</taxon>
        <taxon>Gadidae</taxon>
        <taxon>Gadus</taxon>
    </lineage>
</organism>